<sequence length="427" mass="46374">MEVRRGDGSVFRGVLMPKHETSHPDTVVIKLGNGYNIGVLVGEGDDIVVKGSLRPGTPGALVPLLEEPLQPAEERVYIIGAGGTIASRVDYETGAVKPYLDASELATTIPELQRYASIEAEQLFSILSEDMKPSMWEAIVDRAARVLEAGYDGVVVAHGTDTMAFTASALSFAFHKGLPSPVILTGSQRSSDRPSSDAAFNLTASVLAASRAPFAEVAVVMHGETGDTYALAHRGVRVKKMHSSRRDAFQSVNDKPLARIYPFEGRVEMLRDDYRRRGESGLEVDNGFEERVALVKHFPGLISEVIDALLDRGFKGIVVEGTGFGHVSSDAIKSIERARDQGVPIVITTQTVFGRVNLNVYSTGRKMLAAGAIPAGDMTSEAAYAKLSWILARTRELEVVRKMFQRNLAGEVSERHILRLYRHIGGV</sequence>
<name>GATD_AERPE</name>
<reference key="1">
    <citation type="journal article" date="1999" name="DNA Res.">
        <title>Complete genome sequence of an aerobic hyper-thermophilic crenarchaeon, Aeropyrum pernix K1.</title>
        <authorList>
            <person name="Kawarabayasi Y."/>
            <person name="Hino Y."/>
            <person name="Horikawa H."/>
            <person name="Yamazaki S."/>
            <person name="Haikawa Y."/>
            <person name="Jin-no K."/>
            <person name="Takahashi M."/>
            <person name="Sekine M."/>
            <person name="Baba S."/>
            <person name="Ankai A."/>
            <person name="Kosugi H."/>
            <person name="Hosoyama A."/>
            <person name="Fukui S."/>
            <person name="Nagai Y."/>
            <person name="Nishijima K."/>
            <person name="Nakazawa H."/>
            <person name="Takamiya M."/>
            <person name="Masuda S."/>
            <person name="Funahashi T."/>
            <person name="Tanaka T."/>
            <person name="Kudoh Y."/>
            <person name="Yamazaki J."/>
            <person name="Kushida N."/>
            <person name="Oguchi A."/>
            <person name="Aoki K."/>
            <person name="Kubota K."/>
            <person name="Nakamura Y."/>
            <person name="Nomura N."/>
            <person name="Sako Y."/>
            <person name="Kikuchi H."/>
        </authorList>
    </citation>
    <scope>NUCLEOTIDE SEQUENCE [LARGE SCALE GENOMIC DNA]</scope>
    <source>
        <strain>ATCC 700893 / DSM 11879 / JCM 9820 / NBRC 100138 / K1</strain>
    </source>
</reference>
<organism>
    <name type="scientific">Aeropyrum pernix (strain ATCC 700893 / DSM 11879 / JCM 9820 / NBRC 100138 / K1)</name>
    <dbReference type="NCBI Taxonomy" id="272557"/>
    <lineage>
        <taxon>Archaea</taxon>
        <taxon>Thermoproteota</taxon>
        <taxon>Thermoprotei</taxon>
        <taxon>Desulfurococcales</taxon>
        <taxon>Desulfurococcaceae</taxon>
        <taxon>Aeropyrum</taxon>
    </lineage>
</organism>
<gene>
    <name evidence="1" type="primary">gatD</name>
    <name type="ordered locus">APE_2200</name>
</gene>
<evidence type="ECO:0000255" key="1">
    <source>
        <dbReference type="HAMAP-Rule" id="MF_00586"/>
    </source>
</evidence>
<evidence type="ECO:0000255" key="2">
    <source>
        <dbReference type="PROSITE-ProRule" id="PRU01068"/>
    </source>
</evidence>
<comment type="function">
    <text evidence="1">Allows the formation of correctly charged Gln-tRNA(Gln) through the transamidation of misacylated Glu-tRNA(Gln) in organisms which lack glutaminyl-tRNA synthetase. The reaction takes place in the presence of glutamine and ATP through an activated gamma-phospho-Glu-tRNA(Gln). The GatDE system is specific for glutamate and does not act on aspartate.</text>
</comment>
<comment type="catalytic activity">
    <reaction evidence="1">
        <text>L-glutamyl-tRNA(Gln) + L-glutamine + ATP + H2O = L-glutaminyl-tRNA(Gln) + L-glutamate + ADP + phosphate + H(+)</text>
        <dbReference type="Rhea" id="RHEA:17521"/>
        <dbReference type="Rhea" id="RHEA-COMP:9681"/>
        <dbReference type="Rhea" id="RHEA-COMP:9684"/>
        <dbReference type="ChEBI" id="CHEBI:15377"/>
        <dbReference type="ChEBI" id="CHEBI:15378"/>
        <dbReference type="ChEBI" id="CHEBI:29985"/>
        <dbReference type="ChEBI" id="CHEBI:30616"/>
        <dbReference type="ChEBI" id="CHEBI:43474"/>
        <dbReference type="ChEBI" id="CHEBI:58359"/>
        <dbReference type="ChEBI" id="CHEBI:78520"/>
        <dbReference type="ChEBI" id="CHEBI:78521"/>
        <dbReference type="ChEBI" id="CHEBI:456216"/>
    </reaction>
</comment>
<comment type="subunit">
    <text evidence="1">Heterodimer of GatD and GatE.</text>
</comment>
<comment type="similarity">
    <text evidence="1">Belongs to the asparaginase 1 family. GatD subfamily.</text>
</comment>
<proteinExistence type="inferred from homology"/>
<protein>
    <recommendedName>
        <fullName evidence="1">Glutamyl-tRNA(Gln) amidotransferase subunit D</fullName>
        <shortName evidence="1">Glu-ADT subunit D</shortName>
        <ecNumber evidence="1">6.3.5.-</ecNumber>
    </recommendedName>
</protein>
<keyword id="KW-0067">ATP-binding</keyword>
<keyword id="KW-0436">Ligase</keyword>
<keyword id="KW-0547">Nucleotide-binding</keyword>
<keyword id="KW-0648">Protein biosynthesis</keyword>
<keyword id="KW-1185">Reference proteome</keyword>
<dbReference type="EC" id="6.3.5.-" evidence="1"/>
<dbReference type="EMBL" id="BA000002">
    <property type="protein sequence ID" value="BAA81212.1"/>
    <property type="molecule type" value="Genomic_DNA"/>
</dbReference>
<dbReference type="PIR" id="D72528">
    <property type="entry name" value="D72528"/>
</dbReference>
<dbReference type="SMR" id="Q9Y9T8"/>
<dbReference type="STRING" id="272557.APE_2200"/>
<dbReference type="EnsemblBacteria" id="BAA81212">
    <property type="protein sequence ID" value="BAA81212"/>
    <property type="gene ID" value="APE_2200"/>
</dbReference>
<dbReference type="KEGG" id="ape:APE_2200"/>
<dbReference type="PATRIC" id="fig|272557.25.peg.1470"/>
<dbReference type="eggNOG" id="arCOG01924">
    <property type="taxonomic scope" value="Archaea"/>
</dbReference>
<dbReference type="Proteomes" id="UP000002518">
    <property type="component" value="Chromosome"/>
</dbReference>
<dbReference type="GO" id="GO:0004067">
    <property type="term" value="F:asparaginase activity"/>
    <property type="evidence" value="ECO:0007669"/>
    <property type="project" value="InterPro"/>
</dbReference>
<dbReference type="GO" id="GO:0005524">
    <property type="term" value="F:ATP binding"/>
    <property type="evidence" value="ECO:0007669"/>
    <property type="project" value="UniProtKB-KW"/>
</dbReference>
<dbReference type="GO" id="GO:0050567">
    <property type="term" value="F:glutaminyl-tRNA synthase (glutamine-hydrolyzing) activity"/>
    <property type="evidence" value="ECO:0007669"/>
    <property type="project" value="UniProtKB-UniRule"/>
</dbReference>
<dbReference type="GO" id="GO:0006520">
    <property type="term" value="P:amino acid metabolic process"/>
    <property type="evidence" value="ECO:0007669"/>
    <property type="project" value="InterPro"/>
</dbReference>
<dbReference type="GO" id="GO:0006450">
    <property type="term" value="P:regulation of translational fidelity"/>
    <property type="evidence" value="ECO:0007669"/>
    <property type="project" value="InterPro"/>
</dbReference>
<dbReference type="GO" id="GO:0006412">
    <property type="term" value="P:translation"/>
    <property type="evidence" value="ECO:0007669"/>
    <property type="project" value="UniProtKB-UniRule"/>
</dbReference>
<dbReference type="CDD" id="cd08962">
    <property type="entry name" value="GatD"/>
    <property type="match status" value="1"/>
</dbReference>
<dbReference type="Gene3D" id="2.30.30.520">
    <property type="match status" value="1"/>
</dbReference>
<dbReference type="Gene3D" id="3.40.50.40">
    <property type="match status" value="1"/>
</dbReference>
<dbReference type="Gene3D" id="3.40.50.1170">
    <property type="entry name" value="L-asparaginase, N-terminal domain"/>
    <property type="match status" value="1"/>
</dbReference>
<dbReference type="HAMAP" id="MF_00586">
    <property type="entry name" value="GatD"/>
    <property type="match status" value="1"/>
</dbReference>
<dbReference type="InterPro" id="IPR006033">
    <property type="entry name" value="AsnA_fam"/>
</dbReference>
<dbReference type="InterPro" id="IPR036152">
    <property type="entry name" value="Asp/glu_Ase-like_sf"/>
</dbReference>
<dbReference type="InterPro" id="IPR006034">
    <property type="entry name" value="Asparaginase/glutaminase-like"/>
</dbReference>
<dbReference type="InterPro" id="IPR027475">
    <property type="entry name" value="Asparaginase/glutaminase_AS2"/>
</dbReference>
<dbReference type="InterPro" id="IPR040919">
    <property type="entry name" value="Asparaginase_C"/>
</dbReference>
<dbReference type="InterPro" id="IPR011878">
    <property type="entry name" value="GatD"/>
</dbReference>
<dbReference type="InterPro" id="IPR040918">
    <property type="entry name" value="GatD_N"/>
</dbReference>
<dbReference type="InterPro" id="IPR037222">
    <property type="entry name" value="GatD_N_sf"/>
</dbReference>
<dbReference type="InterPro" id="IPR027473">
    <property type="entry name" value="L-asparaginase_C"/>
</dbReference>
<dbReference type="InterPro" id="IPR027474">
    <property type="entry name" value="L-asparaginase_N"/>
</dbReference>
<dbReference type="InterPro" id="IPR037152">
    <property type="entry name" value="L-asparaginase_N_sf"/>
</dbReference>
<dbReference type="NCBIfam" id="TIGR00519">
    <property type="entry name" value="asnASE_I"/>
    <property type="match status" value="1"/>
</dbReference>
<dbReference type="NCBIfam" id="TIGR02153">
    <property type="entry name" value="gatD_arch"/>
    <property type="match status" value="1"/>
</dbReference>
<dbReference type="NCBIfam" id="NF003217">
    <property type="entry name" value="PRK04183.1"/>
    <property type="match status" value="1"/>
</dbReference>
<dbReference type="PANTHER" id="PTHR11707:SF28">
    <property type="entry name" value="60 KDA LYSOPHOSPHOLIPASE"/>
    <property type="match status" value="1"/>
</dbReference>
<dbReference type="PANTHER" id="PTHR11707">
    <property type="entry name" value="L-ASPARAGINASE"/>
    <property type="match status" value="1"/>
</dbReference>
<dbReference type="Pfam" id="PF00710">
    <property type="entry name" value="Asparaginase"/>
    <property type="match status" value="1"/>
</dbReference>
<dbReference type="Pfam" id="PF17763">
    <property type="entry name" value="Asparaginase_C"/>
    <property type="match status" value="1"/>
</dbReference>
<dbReference type="Pfam" id="PF18195">
    <property type="entry name" value="GatD_N"/>
    <property type="match status" value="1"/>
</dbReference>
<dbReference type="PIRSF" id="PIRSF500175">
    <property type="entry name" value="Glu_ADT_D"/>
    <property type="match status" value="1"/>
</dbReference>
<dbReference type="PIRSF" id="PIRSF001220">
    <property type="entry name" value="L-ASNase_gatD"/>
    <property type="match status" value="1"/>
</dbReference>
<dbReference type="PRINTS" id="PR00139">
    <property type="entry name" value="ASNGLNASE"/>
</dbReference>
<dbReference type="SFLD" id="SFLDS00057">
    <property type="entry name" value="Glutaminase/Asparaginase"/>
    <property type="match status" value="1"/>
</dbReference>
<dbReference type="SMART" id="SM00870">
    <property type="entry name" value="Asparaginase"/>
    <property type="match status" value="1"/>
</dbReference>
<dbReference type="SUPFAM" id="SSF141300">
    <property type="entry name" value="GatD N-terminal domain-like"/>
    <property type="match status" value="1"/>
</dbReference>
<dbReference type="SUPFAM" id="SSF53774">
    <property type="entry name" value="Glutaminase/Asparaginase"/>
    <property type="match status" value="1"/>
</dbReference>
<dbReference type="PROSITE" id="PS00917">
    <property type="entry name" value="ASN_GLN_ASE_2"/>
    <property type="match status" value="1"/>
</dbReference>
<dbReference type="PROSITE" id="PS51732">
    <property type="entry name" value="ASN_GLN_ASE_3"/>
    <property type="match status" value="1"/>
</dbReference>
<accession>Q9Y9T8</accession>
<feature type="chain" id="PRO_0000140048" description="Glutamyl-tRNA(Gln) amidotransferase subunit D">
    <location>
        <begin position="1"/>
        <end position="427"/>
    </location>
</feature>
<feature type="domain" description="Asparaginase/glutaminase" evidence="2">
    <location>
        <begin position="74"/>
        <end position="407"/>
    </location>
</feature>
<feature type="active site" evidence="1">
    <location>
        <position position="84"/>
    </location>
</feature>
<feature type="active site" evidence="1">
    <location>
        <position position="160"/>
    </location>
</feature>
<feature type="active site" evidence="1">
    <location>
        <position position="161"/>
    </location>
</feature>
<feature type="active site" evidence="1">
    <location>
        <position position="240"/>
    </location>
</feature>